<proteinExistence type="evidence at transcript level"/>
<evidence type="ECO:0000255" key="1">
    <source>
        <dbReference type="HAMAP-Rule" id="MF_03187"/>
    </source>
</evidence>
<evidence type="ECO:0000305" key="2"/>
<feature type="chain" id="PRO_0000311300" description="Protein-lysine N-methyltransferase CG9154">
    <location>
        <begin position="1"/>
        <end position="223"/>
    </location>
</feature>
<feature type="sequence conflict" description="In Ref. 3; AAL28424." evidence="2" ref="3">
    <original>E</original>
    <variation>K</variation>
    <location>
        <position position="75"/>
    </location>
</feature>
<name>EFM5_DROME</name>
<sequence>MDDDISLPADTLAILNEFLLERSKREAEEENQIANKTGKDAQFEEDWQLSQFWYSTETKHALRDVVRKLLAERTEDSGDFSIALLSCPSLYKDIREIHDTVHIFEFDKRFEAYGTDFVHYDLNCVGSNPDYLKEHHQQYDLIVADPPFLSQECIAKTCEIITRLQRNQKESKVILCSGEVVEPWLTARLPVLKCSFRPEHERNLGNKFVSYANFNLDEYIENK</sequence>
<comment type="function">
    <text evidence="1">S-adenosyl-L-methionine-dependent protein-lysine N-methyltransferase that methylates elongation factor 1-alpha.</text>
</comment>
<comment type="subcellular location">
    <subcellularLocation>
        <location evidence="1">Cytoplasm</location>
    </subcellularLocation>
</comment>
<comment type="similarity">
    <text evidence="1">Belongs to the class I-like SAM-binding methyltransferase superfamily. EFM5 family.</text>
</comment>
<keyword id="KW-0963">Cytoplasm</keyword>
<keyword id="KW-0489">Methyltransferase</keyword>
<keyword id="KW-1185">Reference proteome</keyword>
<keyword id="KW-0808">Transferase</keyword>
<dbReference type="EC" id="2.1.1.-" evidence="1"/>
<dbReference type="EMBL" id="AE014134">
    <property type="protein sequence ID" value="AAF52340.2"/>
    <property type="molecule type" value="Genomic_DNA"/>
</dbReference>
<dbReference type="EMBL" id="AY060876">
    <property type="protein sequence ID" value="AAL28424.1"/>
    <property type="molecule type" value="mRNA"/>
</dbReference>
<dbReference type="RefSeq" id="NP_001285662.1">
    <property type="nucleotide sequence ID" value="NM_001298733.1"/>
</dbReference>
<dbReference type="RefSeq" id="NP_608993.2">
    <property type="nucleotide sequence ID" value="NM_135149.3"/>
</dbReference>
<dbReference type="SMR" id="Q9VMH7"/>
<dbReference type="FunCoup" id="Q9VMH7">
    <property type="interactions" value="950"/>
</dbReference>
<dbReference type="STRING" id="7227.FBpp0309827"/>
<dbReference type="PaxDb" id="7227-FBpp0078844"/>
<dbReference type="EnsemblMetazoa" id="FBtr0079213">
    <property type="protein sequence ID" value="FBpp0078844"/>
    <property type="gene ID" value="FBgn0031777"/>
</dbReference>
<dbReference type="EnsemblMetazoa" id="FBtr0343128">
    <property type="protein sequence ID" value="FBpp0309827"/>
    <property type="gene ID" value="FBgn0031777"/>
</dbReference>
<dbReference type="GeneID" id="33858"/>
<dbReference type="KEGG" id="dme:Dmel_CG9154"/>
<dbReference type="UCSC" id="CG9154-RA">
    <property type="organism name" value="d. melanogaster"/>
</dbReference>
<dbReference type="AGR" id="FB:FBgn0031777"/>
<dbReference type="FlyBase" id="FBgn0031777">
    <property type="gene designation" value="CG9154"/>
</dbReference>
<dbReference type="VEuPathDB" id="VectorBase:FBgn0031777"/>
<dbReference type="eggNOG" id="KOG3350">
    <property type="taxonomic scope" value="Eukaryota"/>
</dbReference>
<dbReference type="GeneTree" id="ENSGT00390000016366"/>
<dbReference type="HOGENOM" id="CLU_074410_2_1_1"/>
<dbReference type="InParanoid" id="Q9VMH7"/>
<dbReference type="OMA" id="CNFRPEH"/>
<dbReference type="OrthoDB" id="206354at2759"/>
<dbReference type="PhylomeDB" id="Q9VMH7"/>
<dbReference type="Reactome" id="R-DME-8876725">
    <property type="pathway name" value="Protein methylation"/>
</dbReference>
<dbReference type="BioGRID-ORCS" id="33858">
    <property type="hits" value="0 hits in 1 CRISPR screen"/>
</dbReference>
<dbReference type="GenomeRNAi" id="33858"/>
<dbReference type="PRO" id="PR:Q9VMH7"/>
<dbReference type="Proteomes" id="UP000000803">
    <property type="component" value="Chromosome 2L"/>
</dbReference>
<dbReference type="Bgee" id="FBgn0031777">
    <property type="expression patterns" value="Expressed in adult enteroendocrine precursor cell in adult midgut (Drosophila) and 67 other cell types or tissues"/>
</dbReference>
<dbReference type="ExpressionAtlas" id="Q9VMH7">
    <property type="expression patterns" value="baseline and differential"/>
</dbReference>
<dbReference type="GO" id="GO:0005737">
    <property type="term" value="C:cytoplasm"/>
    <property type="evidence" value="ECO:0007669"/>
    <property type="project" value="UniProtKB-SubCell"/>
</dbReference>
<dbReference type="GO" id="GO:0003676">
    <property type="term" value="F:nucleic acid binding"/>
    <property type="evidence" value="ECO:0007669"/>
    <property type="project" value="InterPro"/>
</dbReference>
<dbReference type="GO" id="GO:0016279">
    <property type="term" value="F:protein-lysine N-methyltransferase activity"/>
    <property type="evidence" value="ECO:0007669"/>
    <property type="project" value="UniProtKB-UniRule"/>
</dbReference>
<dbReference type="GO" id="GO:0032259">
    <property type="term" value="P:methylation"/>
    <property type="evidence" value="ECO:0007669"/>
    <property type="project" value="UniProtKB-KW"/>
</dbReference>
<dbReference type="HAMAP" id="MF_03187">
    <property type="entry name" value="Methyltr_EFM5"/>
    <property type="match status" value="1"/>
</dbReference>
<dbReference type="InterPro" id="IPR002052">
    <property type="entry name" value="DNA_methylase_N6_adenine_CS"/>
</dbReference>
<dbReference type="InterPro" id="IPR019369">
    <property type="entry name" value="Efm5/EEF1AKMT1"/>
</dbReference>
<dbReference type="InterPro" id="IPR041370">
    <property type="entry name" value="Mlase_EEF1AKMT1/ZCCHC4"/>
</dbReference>
<dbReference type="PANTHER" id="PTHR13200">
    <property type="entry name" value="EEF1A LYSINE METHYLTRANSFERASE 1"/>
    <property type="match status" value="1"/>
</dbReference>
<dbReference type="PANTHER" id="PTHR13200:SF0">
    <property type="entry name" value="EEF1A LYSINE METHYLTRANSFERASE 1"/>
    <property type="match status" value="1"/>
</dbReference>
<dbReference type="Pfam" id="PF10237">
    <property type="entry name" value="N6-adenineMlase"/>
    <property type="match status" value="1"/>
</dbReference>
<gene>
    <name type="ORF">CG9154</name>
</gene>
<organism>
    <name type="scientific">Drosophila melanogaster</name>
    <name type="common">Fruit fly</name>
    <dbReference type="NCBI Taxonomy" id="7227"/>
    <lineage>
        <taxon>Eukaryota</taxon>
        <taxon>Metazoa</taxon>
        <taxon>Ecdysozoa</taxon>
        <taxon>Arthropoda</taxon>
        <taxon>Hexapoda</taxon>
        <taxon>Insecta</taxon>
        <taxon>Pterygota</taxon>
        <taxon>Neoptera</taxon>
        <taxon>Endopterygota</taxon>
        <taxon>Diptera</taxon>
        <taxon>Brachycera</taxon>
        <taxon>Muscomorpha</taxon>
        <taxon>Ephydroidea</taxon>
        <taxon>Drosophilidae</taxon>
        <taxon>Drosophila</taxon>
        <taxon>Sophophora</taxon>
    </lineage>
</organism>
<accession>Q9VMH7</accession>
<accession>Q95SB4</accession>
<reference key="1">
    <citation type="journal article" date="2000" name="Science">
        <title>The genome sequence of Drosophila melanogaster.</title>
        <authorList>
            <person name="Adams M.D."/>
            <person name="Celniker S.E."/>
            <person name="Holt R.A."/>
            <person name="Evans C.A."/>
            <person name="Gocayne J.D."/>
            <person name="Amanatides P.G."/>
            <person name="Scherer S.E."/>
            <person name="Li P.W."/>
            <person name="Hoskins R.A."/>
            <person name="Galle R.F."/>
            <person name="George R.A."/>
            <person name="Lewis S.E."/>
            <person name="Richards S."/>
            <person name="Ashburner M."/>
            <person name="Henderson S.N."/>
            <person name="Sutton G.G."/>
            <person name="Wortman J.R."/>
            <person name="Yandell M.D."/>
            <person name="Zhang Q."/>
            <person name="Chen L.X."/>
            <person name="Brandon R.C."/>
            <person name="Rogers Y.-H.C."/>
            <person name="Blazej R.G."/>
            <person name="Champe M."/>
            <person name="Pfeiffer B.D."/>
            <person name="Wan K.H."/>
            <person name="Doyle C."/>
            <person name="Baxter E.G."/>
            <person name="Helt G."/>
            <person name="Nelson C.R."/>
            <person name="Miklos G.L.G."/>
            <person name="Abril J.F."/>
            <person name="Agbayani A."/>
            <person name="An H.-J."/>
            <person name="Andrews-Pfannkoch C."/>
            <person name="Baldwin D."/>
            <person name="Ballew R.M."/>
            <person name="Basu A."/>
            <person name="Baxendale J."/>
            <person name="Bayraktaroglu L."/>
            <person name="Beasley E.M."/>
            <person name="Beeson K.Y."/>
            <person name="Benos P.V."/>
            <person name="Berman B.P."/>
            <person name="Bhandari D."/>
            <person name="Bolshakov S."/>
            <person name="Borkova D."/>
            <person name="Botchan M.R."/>
            <person name="Bouck J."/>
            <person name="Brokstein P."/>
            <person name="Brottier P."/>
            <person name="Burtis K.C."/>
            <person name="Busam D.A."/>
            <person name="Butler H."/>
            <person name="Cadieu E."/>
            <person name="Center A."/>
            <person name="Chandra I."/>
            <person name="Cherry J.M."/>
            <person name="Cawley S."/>
            <person name="Dahlke C."/>
            <person name="Davenport L.B."/>
            <person name="Davies P."/>
            <person name="de Pablos B."/>
            <person name="Delcher A."/>
            <person name="Deng Z."/>
            <person name="Mays A.D."/>
            <person name="Dew I."/>
            <person name="Dietz S.M."/>
            <person name="Dodson K."/>
            <person name="Doup L.E."/>
            <person name="Downes M."/>
            <person name="Dugan-Rocha S."/>
            <person name="Dunkov B.C."/>
            <person name="Dunn P."/>
            <person name="Durbin K.J."/>
            <person name="Evangelista C.C."/>
            <person name="Ferraz C."/>
            <person name="Ferriera S."/>
            <person name="Fleischmann W."/>
            <person name="Fosler C."/>
            <person name="Gabrielian A.E."/>
            <person name="Garg N.S."/>
            <person name="Gelbart W.M."/>
            <person name="Glasser K."/>
            <person name="Glodek A."/>
            <person name="Gong F."/>
            <person name="Gorrell J.H."/>
            <person name="Gu Z."/>
            <person name="Guan P."/>
            <person name="Harris M."/>
            <person name="Harris N.L."/>
            <person name="Harvey D.A."/>
            <person name="Heiman T.J."/>
            <person name="Hernandez J.R."/>
            <person name="Houck J."/>
            <person name="Hostin D."/>
            <person name="Houston K.A."/>
            <person name="Howland T.J."/>
            <person name="Wei M.-H."/>
            <person name="Ibegwam C."/>
            <person name="Jalali M."/>
            <person name="Kalush F."/>
            <person name="Karpen G.H."/>
            <person name="Ke Z."/>
            <person name="Kennison J.A."/>
            <person name="Ketchum K.A."/>
            <person name="Kimmel B.E."/>
            <person name="Kodira C.D."/>
            <person name="Kraft C.L."/>
            <person name="Kravitz S."/>
            <person name="Kulp D."/>
            <person name="Lai Z."/>
            <person name="Lasko P."/>
            <person name="Lei Y."/>
            <person name="Levitsky A.A."/>
            <person name="Li J.H."/>
            <person name="Li Z."/>
            <person name="Liang Y."/>
            <person name="Lin X."/>
            <person name="Liu X."/>
            <person name="Mattei B."/>
            <person name="McIntosh T.C."/>
            <person name="McLeod M.P."/>
            <person name="McPherson D."/>
            <person name="Merkulov G."/>
            <person name="Milshina N.V."/>
            <person name="Mobarry C."/>
            <person name="Morris J."/>
            <person name="Moshrefi A."/>
            <person name="Mount S.M."/>
            <person name="Moy M."/>
            <person name="Murphy B."/>
            <person name="Murphy L."/>
            <person name="Muzny D.M."/>
            <person name="Nelson D.L."/>
            <person name="Nelson D.R."/>
            <person name="Nelson K.A."/>
            <person name="Nixon K."/>
            <person name="Nusskern D.R."/>
            <person name="Pacleb J.M."/>
            <person name="Palazzolo M."/>
            <person name="Pittman G.S."/>
            <person name="Pan S."/>
            <person name="Pollard J."/>
            <person name="Puri V."/>
            <person name="Reese M.G."/>
            <person name="Reinert K."/>
            <person name="Remington K."/>
            <person name="Saunders R.D.C."/>
            <person name="Scheeler F."/>
            <person name="Shen H."/>
            <person name="Shue B.C."/>
            <person name="Siden-Kiamos I."/>
            <person name="Simpson M."/>
            <person name="Skupski M.P."/>
            <person name="Smith T.J."/>
            <person name="Spier E."/>
            <person name="Spradling A.C."/>
            <person name="Stapleton M."/>
            <person name="Strong R."/>
            <person name="Sun E."/>
            <person name="Svirskas R."/>
            <person name="Tector C."/>
            <person name="Turner R."/>
            <person name="Venter E."/>
            <person name="Wang A.H."/>
            <person name="Wang X."/>
            <person name="Wang Z.-Y."/>
            <person name="Wassarman D.A."/>
            <person name="Weinstock G.M."/>
            <person name="Weissenbach J."/>
            <person name="Williams S.M."/>
            <person name="Woodage T."/>
            <person name="Worley K.C."/>
            <person name="Wu D."/>
            <person name="Yang S."/>
            <person name="Yao Q.A."/>
            <person name="Ye J."/>
            <person name="Yeh R.-F."/>
            <person name="Zaveri J.S."/>
            <person name="Zhan M."/>
            <person name="Zhang G."/>
            <person name="Zhao Q."/>
            <person name="Zheng L."/>
            <person name="Zheng X.H."/>
            <person name="Zhong F.N."/>
            <person name="Zhong W."/>
            <person name="Zhou X."/>
            <person name="Zhu S.C."/>
            <person name="Zhu X."/>
            <person name="Smith H.O."/>
            <person name="Gibbs R.A."/>
            <person name="Myers E.W."/>
            <person name="Rubin G.M."/>
            <person name="Venter J.C."/>
        </authorList>
    </citation>
    <scope>NUCLEOTIDE SEQUENCE [LARGE SCALE GENOMIC DNA]</scope>
    <source>
        <strain>Berkeley</strain>
    </source>
</reference>
<reference key="2">
    <citation type="journal article" date="2002" name="Genome Biol.">
        <title>Annotation of the Drosophila melanogaster euchromatic genome: a systematic review.</title>
        <authorList>
            <person name="Misra S."/>
            <person name="Crosby M.A."/>
            <person name="Mungall C.J."/>
            <person name="Matthews B.B."/>
            <person name="Campbell K.S."/>
            <person name="Hradecky P."/>
            <person name="Huang Y."/>
            <person name="Kaminker J.S."/>
            <person name="Millburn G.H."/>
            <person name="Prochnik S.E."/>
            <person name="Smith C.D."/>
            <person name="Tupy J.L."/>
            <person name="Whitfield E.J."/>
            <person name="Bayraktaroglu L."/>
            <person name="Berman B.P."/>
            <person name="Bettencourt B.R."/>
            <person name="Celniker S.E."/>
            <person name="de Grey A.D.N.J."/>
            <person name="Drysdale R.A."/>
            <person name="Harris N.L."/>
            <person name="Richter J."/>
            <person name="Russo S."/>
            <person name="Schroeder A.J."/>
            <person name="Shu S.Q."/>
            <person name="Stapleton M."/>
            <person name="Yamada C."/>
            <person name="Ashburner M."/>
            <person name="Gelbart W.M."/>
            <person name="Rubin G.M."/>
            <person name="Lewis S.E."/>
        </authorList>
    </citation>
    <scope>GENOME REANNOTATION</scope>
    <source>
        <strain>Berkeley</strain>
    </source>
</reference>
<reference key="3">
    <citation type="journal article" date="2002" name="Genome Biol.">
        <title>A Drosophila full-length cDNA resource.</title>
        <authorList>
            <person name="Stapleton M."/>
            <person name="Carlson J.W."/>
            <person name="Brokstein P."/>
            <person name="Yu C."/>
            <person name="Champe M."/>
            <person name="George R.A."/>
            <person name="Guarin H."/>
            <person name="Kronmiller B."/>
            <person name="Pacleb J.M."/>
            <person name="Park S."/>
            <person name="Wan K.H."/>
            <person name="Rubin G.M."/>
            <person name="Celniker S.E."/>
        </authorList>
    </citation>
    <scope>NUCLEOTIDE SEQUENCE [LARGE SCALE MRNA]</scope>
    <source>
        <strain>Berkeley</strain>
        <tissue>Ovary</tissue>
    </source>
</reference>
<protein>
    <recommendedName>
        <fullName evidence="1">Protein-lysine N-methyltransferase CG9154</fullName>
        <ecNumber evidence="1">2.1.1.-</ecNumber>
    </recommendedName>
</protein>